<comment type="subcellular location">
    <subcellularLocation>
        <location evidence="2">Membrane</location>
        <topology evidence="2">Multi-pass membrane protein</topology>
    </subcellularLocation>
</comment>
<comment type="similarity">
    <text evidence="2">Belongs to the AIM11 family.</text>
</comment>
<gene>
    <name type="primary">AIM11</name>
    <name type="synonym">GEP8</name>
    <name type="ORF">SCRG_04571</name>
</gene>
<keyword id="KW-0472">Membrane</keyword>
<keyword id="KW-0812">Transmembrane</keyword>
<keyword id="KW-1133">Transmembrane helix</keyword>
<evidence type="ECO:0000255" key="1"/>
<evidence type="ECO:0000305" key="2"/>
<feature type="chain" id="PRO_0000405656" description="Altered inheritance of mitochondria protein 11">
    <location>
        <begin position="1"/>
        <end position="137"/>
    </location>
</feature>
<feature type="transmembrane region" description="Helical" evidence="1">
    <location>
        <begin position="20"/>
        <end position="37"/>
    </location>
</feature>
<feature type="transmembrane region" description="Helical" evidence="1">
    <location>
        <begin position="66"/>
        <end position="88"/>
    </location>
</feature>
<reference key="1">
    <citation type="submission" date="2005-03" db="EMBL/GenBank/DDBJ databases">
        <title>Annotation of the Saccharomyces cerevisiae RM11-1a genome.</title>
        <authorList>
            <consortium name="The Broad Institute Genome Sequencing Platform"/>
            <person name="Birren B.W."/>
            <person name="Lander E.S."/>
            <person name="Galagan J.E."/>
            <person name="Nusbaum C."/>
            <person name="Devon K."/>
            <person name="Cuomo C."/>
            <person name="Jaffe D.B."/>
            <person name="Butler J."/>
            <person name="Alvarez P."/>
            <person name="Gnerre S."/>
            <person name="Grabherr M."/>
            <person name="Kleber M."/>
            <person name="Mauceli E.W."/>
            <person name="Brockman W."/>
            <person name="MacCallum I.A."/>
            <person name="Rounsley S."/>
            <person name="Young S.K."/>
            <person name="LaButti K."/>
            <person name="Pushparaj V."/>
            <person name="DeCaprio D."/>
            <person name="Crawford M."/>
            <person name="Koehrsen M."/>
            <person name="Engels R."/>
            <person name="Montgomery P."/>
            <person name="Pearson M."/>
            <person name="Howarth C."/>
            <person name="Larson L."/>
            <person name="Luoma S."/>
            <person name="White J."/>
            <person name="O'Leary S."/>
            <person name="Kodira C.D."/>
            <person name="Zeng Q."/>
            <person name="Yandava C."/>
            <person name="Alvarado L."/>
            <person name="Pratt S."/>
            <person name="Kruglyak L."/>
        </authorList>
    </citation>
    <scope>NUCLEOTIDE SEQUENCE [LARGE SCALE GENOMIC DNA]</scope>
    <source>
        <strain>RM11-1a</strain>
    </source>
</reference>
<organism>
    <name type="scientific">Saccharomyces cerevisiae (strain RM11-1a)</name>
    <name type="common">Baker's yeast</name>
    <dbReference type="NCBI Taxonomy" id="285006"/>
    <lineage>
        <taxon>Eukaryota</taxon>
        <taxon>Fungi</taxon>
        <taxon>Dikarya</taxon>
        <taxon>Ascomycota</taxon>
        <taxon>Saccharomycotina</taxon>
        <taxon>Saccharomycetes</taxon>
        <taxon>Saccharomycetales</taxon>
        <taxon>Saccharomycetaceae</taxon>
        <taxon>Saccharomyces</taxon>
    </lineage>
</organism>
<name>AIM11_YEAS1</name>
<accession>B3LRL2</accession>
<protein>
    <recommendedName>
        <fullName>Altered inheritance of mitochondria protein 11</fullName>
    </recommendedName>
    <alternativeName>
        <fullName>Genetic interactor of prohibitins 8</fullName>
    </alternativeName>
</protein>
<sequence>MIEEKKELKKRRVLQMARFYGAAAFTLITMRLISRAIKVRKYVPSIFQQNYKLPPFSQRNEAMSALTYASAASIGTFSTLIFGFCWALDISTAREFVFKTREFMSLPQALETDTSMDEETSKLTKQLQDLLSSENNK</sequence>
<proteinExistence type="inferred from homology"/>
<dbReference type="EMBL" id="CH408052">
    <property type="protein sequence ID" value="EDV08925.1"/>
    <property type="molecule type" value="Genomic_DNA"/>
</dbReference>
<dbReference type="SMR" id="B3LRL2"/>
<dbReference type="HOGENOM" id="CLU_118700_0_0_1"/>
<dbReference type="OrthoDB" id="12004at4893"/>
<dbReference type="Proteomes" id="UP000008335">
    <property type="component" value="Unassembled WGS sequence"/>
</dbReference>
<dbReference type="GO" id="GO:0016020">
    <property type="term" value="C:membrane"/>
    <property type="evidence" value="ECO:0007669"/>
    <property type="project" value="UniProtKB-SubCell"/>
</dbReference>
<dbReference type="GO" id="GO:0005739">
    <property type="term" value="C:mitochondrion"/>
    <property type="evidence" value="ECO:0007669"/>
    <property type="project" value="TreeGrafter"/>
</dbReference>
<dbReference type="InterPro" id="IPR038814">
    <property type="entry name" value="AIM11"/>
</dbReference>
<dbReference type="PANTHER" id="PTHR39136">
    <property type="entry name" value="ALTERED INHERITANCE OF MITOCHONDRIA PROTEIN 11"/>
    <property type="match status" value="1"/>
</dbReference>
<dbReference type="PANTHER" id="PTHR39136:SF1">
    <property type="entry name" value="ALTERED INHERITANCE OF MITOCHONDRIA PROTEIN 11"/>
    <property type="match status" value="1"/>
</dbReference>